<gene>
    <name evidence="6" type="primary">ORF1</name>
</gene>
<name>LAN1_PYRDE</name>
<feature type="chain" id="PRO_0000461535" description="Sterol 14-alpha demethylase">
    <location>
        <begin position="1"/>
        <end position="540"/>
    </location>
</feature>
<feature type="transmembrane region" description="Helical" evidence="4">
    <location>
        <begin position="41"/>
        <end position="61"/>
    </location>
</feature>
<feature type="binding site" description="axial binding residue" evidence="2">
    <location>
        <position position="485"/>
    </location>
    <ligand>
        <name>heme</name>
        <dbReference type="ChEBI" id="CHEBI:30413"/>
    </ligand>
    <ligandPart>
        <name>Fe</name>
        <dbReference type="ChEBI" id="CHEBI:18248"/>
    </ligandPart>
</feature>
<dbReference type="EC" id="1.14.14.154" evidence="8"/>
<dbReference type="EMBL" id="MW768702">
    <property type="protein sequence ID" value="QUF61541.1"/>
    <property type="molecule type" value="Genomic_DNA"/>
</dbReference>
<dbReference type="UniPathway" id="UPA00766"/>
<dbReference type="GO" id="GO:0016020">
    <property type="term" value="C:membrane"/>
    <property type="evidence" value="ECO:0007669"/>
    <property type="project" value="UniProtKB-SubCell"/>
</dbReference>
<dbReference type="GO" id="GO:0020037">
    <property type="term" value="F:heme binding"/>
    <property type="evidence" value="ECO:0007669"/>
    <property type="project" value="InterPro"/>
</dbReference>
<dbReference type="GO" id="GO:0005506">
    <property type="term" value="F:iron ion binding"/>
    <property type="evidence" value="ECO:0007669"/>
    <property type="project" value="InterPro"/>
</dbReference>
<dbReference type="GO" id="GO:0004497">
    <property type="term" value="F:monooxygenase activity"/>
    <property type="evidence" value="ECO:0007669"/>
    <property type="project" value="UniProtKB-KW"/>
</dbReference>
<dbReference type="GO" id="GO:0016705">
    <property type="term" value="F:oxidoreductase activity, acting on paired donors, with incorporation or reduction of molecular oxygen"/>
    <property type="evidence" value="ECO:0007669"/>
    <property type="project" value="InterPro"/>
</dbReference>
<dbReference type="GO" id="GO:0016126">
    <property type="term" value="P:sterol biosynthetic process"/>
    <property type="evidence" value="ECO:0007669"/>
    <property type="project" value="UniProtKB-KW"/>
</dbReference>
<dbReference type="CDD" id="cd11042">
    <property type="entry name" value="CYP51-like"/>
    <property type="match status" value="1"/>
</dbReference>
<dbReference type="FunFam" id="1.10.630.10:FF:000033">
    <property type="entry name" value="14-alpha sterol demethylase"/>
    <property type="match status" value="1"/>
</dbReference>
<dbReference type="Gene3D" id="1.10.630.10">
    <property type="entry name" value="Cytochrome P450"/>
    <property type="match status" value="1"/>
</dbReference>
<dbReference type="InterPro" id="IPR050529">
    <property type="entry name" value="CYP450_sterol_14alpha_dmase"/>
</dbReference>
<dbReference type="InterPro" id="IPR001128">
    <property type="entry name" value="Cyt_P450"/>
</dbReference>
<dbReference type="InterPro" id="IPR017972">
    <property type="entry name" value="Cyt_P450_CS"/>
</dbReference>
<dbReference type="InterPro" id="IPR002403">
    <property type="entry name" value="Cyt_P450_E_grp-IV"/>
</dbReference>
<dbReference type="InterPro" id="IPR036396">
    <property type="entry name" value="Cyt_P450_sf"/>
</dbReference>
<dbReference type="PANTHER" id="PTHR24304:SF2">
    <property type="entry name" value="24-HYDROXYCHOLESTEROL 7-ALPHA-HYDROXYLASE"/>
    <property type="match status" value="1"/>
</dbReference>
<dbReference type="PANTHER" id="PTHR24304">
    <property type="entry name" value="CYTOCHROME P450 FAMILY 7"/>
    <property type="match status" value="1"/>
</dbReference>
<dbReference type="Pfam" id="PF00067">
    <property type="entry name" value="p450"/>
    <property type="match status" value="1"/>
</dbReference>
<dbReference type="PRINTS" id="PR00465">
    <property type="entry name" value="EP450IV"/>
</dbReference>
<dbReference type="PRINTS" id="PR00385">
    <property type="entry name" value="P450"/>
</dbReference>
<dbReference type="SUPFAM" id="SSF48264">
    <property type="entry name" value="Cytochrome P450"/>
    <property type="match status" value="1"/>
</dbReference>
<dbReference type="PROSITE" id="PS00086">
    <property type="entry name" value="CYTOCHROME_P450"/>
    <property type="match status" value="1"/>
</dbReference>
<evidence type="ECO:0000250" key="1">
    <source>
        <dbReference type="UniProtKB" id="P10614"/>
    </source>
</evidence>
<evidence type="ECO:0000250" key="2">
    <source>
        <dbReference type="UniProtKB" id="Q16850"/>
    </source>
</evidence>
<evidence type="ECO:0000250" key="3">
    <source>
        <dbReference type="UniProtKB" id="Q4WNT5"/>
    </source>
</evidence>
<evidence type="ECO:0000255" key="4"/>
<evidence type="ECO:0000269" key="5">
    <source>
    </source>
</evidence>
<evidence type="ECO:0000303" key="6">
    <source>
    </source>
</evidence>
<evidence type="ECO:0000305" key="7"/>
<evidence type="ECO:0000305" key="8">
    <source>
    </source>
</evidence>
<keyword id="KW-0349">Heme</keyword>
<keyword id="KW-0408">Iron</keyword>
<keyword id="KW-0444">Lipid biosynthesis</keyword>
<keyword id="KW-0443">Lipid metabolism</keyword>
<keyword id="KW-0472">Membrane</keyword>
<keyword id="KW-0479">Metal-binding</keyword>
<keyword id="KW-0503">Monooxygenase</keyword>
<keyword id="KW-0560">Oxidoreductase</keyword>
<keyword id="KW-0752">Steroid biosynthesis</keyword>
<keyword id="KW-0753">Steroid metabolism</keyword>
<keyword id="KW-0756">Sterol biosynthesis</keyword>
<keyword id="KW-1207">Sterol metabolism</keyword>
<keyword id="KW-0812">Transmembrane</keyword>
<keyword id="KW-1133">Transmembrane helix</keyword>
<reference key="1">
    <citation type="journal article" date="2021" name="J. Am. Chem. Soc.">
        <title>Targeted genome mining reveals the biosynthetic gene clusters of natural product CYP51 inhibitors.</title>
        <authorList>
            <person name="Liu N."/>
            <person name="Abramyan E.D."/>
            <person name="Cheng W."/>
            <person name="Perlatti B."/>
            <person name="Harvey C.J.B."/>
            <person name="Bills G.F."/>
            <person name="Tang Y."/>
        </authorList>
    </citation>
    <scope>NUCLEOTIDE SEQUENCE [GENOMIC DNA]</scope>
    <scope>FUNCTION</scope>
    <scope>PATHWAY</scope>
    <source>
        <strain>TTI-1096</strain>
    </source>
</reference>
<proteinExistence type="inferred from homology"/>
<organism>
    <name type="scientific">Pyrenophora dematioidea</name>
    <name type="common">Helminthosporium dematioideum</name>
    <dbReference type="NCBI Taxonomy" id="139229"/>
    <lineage>
        <taxon>Eukaryota</taxon>
        <taxon>Fungi</taxon>
        <taxon>Dikarya</taxon>
        <taxon>Ascomycota</taxon>
        <taxon>Pezizomycotina</taxon>
        <taxon>Dothideomycetes</taxon>
        <taxon>Pleosporomycetidae</taxon>
        <taxon>Pleosporales</taxon>
        <taxon>Pleosporineae</taxon>
        <taxon>Pleosporaceae</taxon>
        <taxon>Pyrenophora</taxon>
    </lineage>
</organism>
<sequence>MGLSHSGEIVYIHPSSPVDLFTTCASLPTKPPPSFSDMPSPLFLVSGFLGVCVAYAVANIIRQLLFPNAKEPPVVFHWFPWLGSALTYGKDPYKFLFAARAKYGDVFTFVLLGRNVTVHLGVAGNDFVFNGKETHMNAEEIYGPLCNPVFGEGVVYDCPNSKLMEQKKFVKFGLTTDALKAHVRLIEHEVVNYIKSSRDFKGPSGVINVPPVMAQITIFTAAIALQGPEVRSKLTNEFASLYHDLDGGFSPINFVLPHAPFPHNIKRDRAQLKMRKIYEAIIAERRAGKIPPTTDMISHLMQCSYKNGRPIPDSEISNMMITILMAGQHNSSNIASWIMLHLANEPQLCEELYQEQLDQLADEHGNLPELELHTVEKLKLHSSVVKETLRMHNAIHSIMRLVKQPLPVPNTSWTVPPGHAVLASPGVSANSNEYFLNPTKWDPHRWDDRVIEEDDESEMVDYGYGRTSRGTKSAYLPFGGGRHRCIGEKFAYLNLEVITAVMVRNFRFKNVDGRVDVPGTDYSTMFSRPLEPAEICWERR</sequence>
<accession>P0DXV0</accession>
<comment type="function">
    <text evidence="5">Sterol 14-alpha demethylase; part of the gene cluster that mediates the biosynthesis of tetrahydropyranyl antifungal agent lanomycin that acts as an inhibitor of CYP51 and blocks the ergosterol biosynthesis (PubMed:33857369). Sterol 14-alpha-demethylase plays a critical role in the biosynthesis of ergosterol, the major sterol component in fungal membranes that participates in a variety of functions. Acts as a self-resistant CYP51 that contains mutations found in CYP51s isolated from azole resistance strains and that is not inhibited by the final product of the cluster, lanomycin (PubMed:33857369).</text>
</comment>
<comment type="catalytic activity">
    <reaction evidence="3">
        <text>a 14alpha-methyl steroid + 3 reduced [NADPH--hemoprotein reductase] + 3 O2 = a Delta(14) steroid + formate + 3 oxidized [NADPH--hemoprotein reductase] + 4 H2O + 4 H(+)</text>
        <dbReference type="Rhea" id="RHEA:54028"/>
        <dbReference type="Rhea" id="RHEA-COMP:11964"/>
        <dbReference type="Rhea" id="RHEA-COMP:11965"/>
        <dbReference type="ChEBI" id="CHEBI:15377"/>
        <dbReference type="ChEBI" id="CHEBI:15378"/>
        <dbReference type="ChEBI" id="CHEBI:15379"/>
        <dbReference type="ChEBI" id="CHEBI:15740"/>
        <dbReference type="ChEBI" id="CHEBI:57618"/>
        <dbReference type="ChEBI" id="CHEBI:58210"/>
        <dbReference type="ChEBI" id="CHEBI:138029"/>
        <dbReference type="ChEBI" id="CHEBI:138031"/>
        <dbReference type="EC" id="1.14.14.154"/>
    </reaction>
    <physiologicalReaction direction="left-to-right" evidence="3">
        <dbReference type="Rhea" id="RHEA:54029"/>
    </physiologicalReaction>
</comment>
<comment type="catalytic activity">
    <reaction evidence="1">
        <text>a 14alpha-methyl steroid + reduced [NADPH--hemoprotein reductase] + O2 = a 14alpha-hydroxymethyl steroid + oxidized [NADPH--hemoprotein reductase] + H2O + H(+)</text>
        <dbReference type="Rhea" id="RHEA:68060"/>
        <dbReference type="Rhea" id="RHEA-COMP:11964"/>
        <dbReference type="Rhea" id="RHEA-COMP:11965"/>
        <dbReference type="ChEBI" id="CHEBI:15377"/>
        <dbReference type="ChEBI" id="CHEBI:15378"/>
        <dbReference type="ChEBI" id="CHEBI:15379"/>
        <dbReference type="ChEBI" id="CHEBI:57618"/>
        <dbReference type="ChEBI" id="CHEBI:58210"/>
        <dbReference type="ChEBI" id="CHEBI:138029"/>
        <dbReference type="ChEBI" id="CHEBI:176901"/>
    </reaction>
    <physiologicalReaction direction="left-to-right" evidence="1">
        <dbReference type="Rhea" id="RHEA:68061"/>
    </physiologicalReaction>
</comment>
<comment type="catalytic activity">
    <reaction evidence="1">
        <text>a 14alpha-hydroxymethyl steroid + reduced [NADPH--hemoprotein reductase] + O2 = a 14alpha-formyl steroid + oxidized [NADPH--hemoprotein reductase] + 2 H2O + H(+)</text>
        <dbReference type="Rhea" id="RHEA:68064"/>
        <dbReference type="Rhea" id="RHEA-COMP:11964"/>
        <dbReference type="Rhea" id="RHEA-COMP:11965"/>
        <dbReference type="ChEBI" id="CHEBI:15377"/>
        <dbReference type="ChEBI" id="CHEBI:15378"/>
        <dbReference type="ChEBI" id="CHEBI:15379"/>
        <dbReference type="ChEBI" id="CHEBI:57618"/>
        <dbReference type="ChEBI" id="CHEBI:58210"/>
        <dbReference type="ChEBI" id="CHEBI:176901"/>
        <dbReference type="ChEBI" id="CHEBI:176902"/>
    </reaction>
    <physiologicalReaction direction="left-to-right" evidence="1">
        <dbReference type="Rhea" id="RHEA:68065"/>
    </physiologicalReaction>
</comment>
<comment type="catalytic activity">
    <reaction evidence="1">
        <text>a 14alpha-formyl steroid + reduced [NADPH--hemoprotein reductase] + O2 = a Delta(14) steroid + formate + oxidized [NADPH--hemoprotein reductase] + H2O + 2 H(+)</text>
        <dbReference type="Rhea" id="RHEA:68068"/>
        <dbReference type="Rhea" id="RHEA-COMP:11964"/>
        <dbReference type="Rhea" id="RHEA-COMP:11965"/>
        <dbReference type="ChEBI" id="CHEBI:15377"/>
        <dbReference type="ChEBI" id="CHEBI:15378"/>
        <dbReference type="ChEBI" id="CHEBI:15379"/>
        <dbReference type="ChEBI" id="CHEBI:15740"/>
        <dbReference type="ChEBI" id="CHEBI:57618"/>
        <dbReference type="ChEBI" id="CHEBI:58210"/>
        <dbReference type="ChEBI" id="CHEBI:138031"/>
        <dbReference type="ChEBI" id="CHEBI:176902"/>
    </reaction>
    <physiologicalReaction direction="left-to-right" evidence="1">
        <dbReference type="Rhea" id="RHEA:68069"/>
    </physiologicalReaction>
</comment>
<comment type="catalytic activity">
    <reaction evidence="3">
        <text>lanosterol + 3 reduced [NADPH--hemoprotein reductase] + 3 O2 = 4,4-dimethyl-5alpha-cholesta-8,14,24-trien-3beta-ol + formate + 3 oxidized [NADPH--hemoprotein reductase] + 4 H2O + 4 H(+)</text>
        <dbReference type="Rhea" id="RHEA:25286"/>
        <dbReference type="Rhea" id="RHEA-COMP:11964"/>
        <dbReference type="Rhea" id="RHEA-COMP:11965"/>
        <dbReference type="ChEBI" id="CHEBI:15377"/>
        <dbReference type="ChEBI" id="CHEBI:15378"/>
        <dbReference type="ChEBI" id="CHEBI:15379"/>
        <dbReference type="ChEBI" id="CHEBI:15740"/>
        <dbReference type="ChEBI" id="CHEBI:16521"/>
        <dbReference type="ChEBI" id="CHEBI:17813"/>
        <dbReference type="ChEBI" id="CHEBI:57618"/>
        <dbReference type="ChEBI" id="CHEBI:58210"/>
        <dbReference type="EC" id="1.14.14.154"/>
    </reaction>
    <physiologicalReaction direction="left-to-right" evidence="3">
        <dbReference type="Rhea" id="RHEA:25287"/>
    </physiologicalReaction>
</comment>
<comment type="catalytic activity">
    <reaction evidence="1">
        <text>lanosterol + reduced [NADPH--hemoprotein reductase] + O2 = 32-hydroxylanosterol + oxidized [NADPH--hemoprotein reductase] + H2O + H(+)</text>
        <dbReference type="Rhea" id="RHEA:75103"/>
        <dbReference type="Rhea" id="RHEA-COMP:11964"/>
        <dbReference type="Rhea" id="RHEA-COMP:11965"/>
        <dbReference type="ChEBI" id="CHEBI:15377"/>
        <dbReference type="ChEBI" id="CHEBI:15378"/>
        <dbReference type="ChEBI" id="CHEBI:15379"/>
        <dbReference type="ChEBI" id="CHEBI:16521"/>
        <dbReference type="ChEBI" id="CHEBI:57618"/>
        <dbReference type="ChEBI" id="CHEBI:58210"/>
        <dbReference type="ChEBI" id="CHEBI:166806"/>
    </reaction>
    <physiologicalReaction direction="left-to-right" evidence="1">
        <dbReference type="Rhea" id="RHEA:75104"/>
    </physiologicalReaction>
</comment>
<comment type="catalytic activity">
    <reaction evidence="1">
        <text>32-hydroxylanosterol + reduced [NADPH--hemoprotein reductase] + O2 = 32-oxolanosterol + oxidized [NADPH--hemoprotein reductase] + 2 H2O + H(+)</text>
        <dbReference type="Rhea" id="RHEA:75107"/>
        <dbReference type="Rhea" id="RHEA-COMP:11964"/>
        <dbReference type="Rhea" id="RHEA-COMP:11965"/>
        <dbReference type="ChEBI" id="CHEBI:15377"/>
        <dbReference type="ChEBI" id="CHEBI:15378"/>
        <dbReference type="ChEBI" id="CHEBI:15379"/>
        <dbReference type="ChEBI" id="CHEBI:57618"/>
        <dbReference type="ChEBI" id="CHEBI:58210"/>
        <dbReference type="ChEBI" id="CHEBI:166681"/>
        <dbReference type="ChEBI" id="CHEBI:166806"/>
    </reaction>
    <physiologicalReaction direction="left-to-right" evidence="1">
        <dbReference type="Rhea" id="RHEA:75108"/>
    </physiologicalReaction>
</comment>
<comment type="catalytic activity">
    <reaction evidence="1">
        <text>32-oxolanosterol + reduced [NADPH--hemoprotein reductase] + O2 = 4,4-dimethyl-5alpha-cholesta-8,14,24-trien-3beta-ol + formate + oxidized [NADPH--hemoprotein reductase] + H2O + 2 H(+)</text>
        <dbReference type="Rhea" id="RHEA:75111"/>
        <dbReference type="Rhea" id="RHEA-COMP:11964"/>
        <dbReference type="Rhea" id="RHEA-COMP:11965"/>
        <dbReference type="ChEBI" id="CHEBI:15377"/>
        <dbReference type="ChEBI" id="CHEBI:15378"/>
        <dbReference type="ChEBI" id="CHEBI:15379"/>
        <dbReference type="ChEBI" id="CHEBI:15740"/>
        <dbReference type="ChEBI" id="CHEBI:17813"/>
        <dbReference type="ChEBI" id="CHEBI:57618"/>
        <dbReference type="ChEBI" id="CHEBI:58210"/>
        <dbReference type="ChEBI" id="CHEBI:166681"/>
    </reaction>
    <physiologicalReaction direction="left-to-right" evidence="1">
        <dbReference type="Rhea" id="RHEA:75112"/>
    </physiologicalReaction>
</comment>
<comment type="catalytic activity">
    <reaction evidence="3">
        <text>eburicol + 3 reduced [NADPH--hemoprotein reductase] + 3 O2 = 14-demethyleburicol + formate + 3 oxidized [NADPH--hemoprotein reductase] + 4 H2O + 4 H(+)</text>
        <dbReference type="Rhea" id="RHEA:75439"/>
        <dbReference type="Rhea" id="RHEA-COMP:11964"/>
        <dbReference type="Rhea" id="RHEA-COMP:11965"/>
        <dbReference type="ChEBI" id="CHEBI:15377"/>
        <dbReference type="ChEBI" id="CHEBI:15378"/>
        <dbReference type="ChEBI" id="CHEBI:15379"/>
        <dbReference type="ChEBI" id="CHEBI:15740"/>
        <dbReference type="ChEBI" id="CHEBI:57618"/>
        <dbReference type="ChEBI" id="CHEBI:58210"/>
        <dbReference type="ChEBI" id="CHEBI:70315"/>
        <dbReference type="ChEBI" id="CHEBI:194330"/>
    </reaction>
    <physiologicalReaction direction="left-to-right" evidence="3">
        <dbReference type="Rhea" id="RHEA:75440"/>
    </physiologicalReaction>
</comment>
<comment type="catalytic activity">
    <reaction evidence="1">
        <text>eburicol + reduced [NADPH--hemoprotein reductase] + O2 = 32-hydroxyeburicol + oxidized [NADPH--hemoprotein reductase] + H2O + H(+)</text>
        <dbReference type="Rhea" id="RHEA:75427"/>
        <dbReference type="Rhea" id="RHEA-COMP:11964"/>
        <dbReference type="Rhea" id="RHEA-COMP:11965"/>
        <dbReference type="ChEBI" id="CHEBI:15377"/>
        <dbReference type="ChEBI" id="CHEBI:15378"/>
        <dbReference type="ChEBI" id="CHEBI:15379"/>
        <dbReference type="ChEBI" id="CHEBI:57618"/>
        <dbReference type="ChEBI" id="CHEBI:58210"/>
        <dbReference type="ChEBI" id="CHEBI:70315"/>
        <dbReference type="ChEBI" id="CHEBI:194328"/>
    </reaction>
    <physiologicalReaction direction="left-to-right" evidence="1">
        <dbReference type="Rhea" id="RHEA:75428"/>
    </physiologicalReaction>
</comment>
<comment type="catalytic activity">
    <reaction evidence="1">
        <text>32-hydroxyeburicol + reduced [NADPH--hemoprotein reductase] + O2 = 32-oxoeburicol + oxidized [NADPH--hemoprotein reductase] + 2 H2O + H(+)</text>
        <dbReference type="Rhea" id="RHEA:75431"/>
        <dbReference type="Rhea" id="RHEA-COMP:11964"/>
        <dbReference type="Rhea" id="RHEA-COMP:11965"/>
        <dbReference type="ChEBI" id="CHEBI:15377"/>
        <dbReference type="ChEBI" id="CHEBI:15378"/>
        <dbReference type="ChEBI" id="CHEBI:15379"/>
        <dbReference type="ChEBI" id="CHEBI:57618"/>
        <dbReference type="ChEBI" id="CHEBI:58210"/>
        <dbReference type="ChEBI" id="CHEBI:194328"/>
        <dbReference type="ChEBI" id="CHEBI:194329"/>
    </reaction>
    <physiologicalReaction direction="left-to-right" evidence="1">
        <dbReference type="Rhea" id="RHEA:75432"/>
    </physiologicalReaction>
</comment>
<comment type="catalytic activity">
    <reaction evidence="1">
        <text>32-oxoeburicol + reduced [NADPH--hemoprotein reductase] + O2 = 14-demethyleburicol + formate + oxidized [NADPH--hemoprotein reductase] + H2O + 2 H(+)</text>
        <dbReference type="Rhea" id="RHEA:75435"/>
        <dbReference type="Rhea" id="RHEA-COMP:11964"/>
        <dbReference type="Rhea" id="RHEA-COMP:11965"/>
        <dbReference type="ChEBI" id="CHEBI:15377"/>
        <dbReference type="ChEBI" id="CHEBI:15378"/>
        <dbReference type="ChEBI" id="CHEBI:15379"/>
        <dbReference type="ChEBI" id="CHEBI:15740"/>
        <dbReference type="ChEBI" id="CHEBI:57618"/>
        <dbReference type="ChEBI" id="CHEBI:58210"/>
        <dbReference type="ChEBI" id="CHEBI:194329"/>
        <dbReference type="ChEBI" id="CHEBI:194330"/>
    </reaction>
    <physiologicalReaction direction="left-to-right" evidence="1">
        <dbReference type="Rhea" id="RHEA:75436"/>
    </physiologicalReaction>
</comment>
<comment type="cofactor">
    <cofactor evidence="2">
        <name>heme</name>
        <dbReference type="ChEBI" id="CHEBI:30413"/>
    </cofactor>
</comment>
<comment type="pathway">
    <text evidence="3">Steroid biosynthesis; sterol biosynthesis.</text>
</comment>
<comment type="subcellular location">
    <subcellularLocation>
        <location evidence="4">Membrane</location>
        <topology evidence="4">Single-pass membrane protein</topology>
    </subcellularLocation>
</comment>
<comment type="similarity">
    <text evidence="7">Belongs to the cytochrome P450 family.</text>
</comment>
<protein>
    <recommendedName>
        <fullName evidence="6">Sterol 14-alpha demethylase</fullName>
        <ecNumber evidence="8">1.14.14.154</ecNumber>
    </recommendedName>
    <alternativeName>
        <fullName evidence="6">Cytochrome P450 monooxygenase</fullName>
    </alternativeName>
    <alternativeName>
        <fullName evidence="6">Ergosterol biosynthesis protein</fullName>
    </alternativeName>
    <alternativeName>
        <fullName evidence="6">Lanomycin biosynthesis cluster protein 1</fullName>
    </alternativeName>
</protein>